<evidence type="ECO:0000250" key="1">
    <source>
        <dbReference type="UniProtKB" id="P04038"/>
    </source>
</evidence>
<evidence type="ECO:0000305" key="2"/>
<reference key="1">
    <citation type="submission" date="2003-02" db="EMBL/GenBank/DDBJ databases">
        <title>Co-evolution in cytochrome c oxidase: 9 of 13 subunits show accelerated rates of nonsynonymous substitution in anthropoid primates.</title>
        <authorList>
            <person name="Doan J.W."/>
            <person name="Schmidt T.R."/>
            <person name="Wildman D.E."/>
            <person name="Goldberg A."/>
            <person name="Huttemann M."/>
            <person name="Goodman M."/>
            <person name="Weiss M.L."/>
            <person name="Grossman L.I."/>
        </authorList>
    </citation>
    <scope>NUCLEOTIDE SEQUENCE [MRNA]</scope>
</reference>
<dbReference type="EMBL" id="AY236503">
    <property type="protein sequence ID" value="AAP43949.1"/>
    <property type="molecule type" value="mRNA"/>
</dbReference>
<dbReference type="SMR" id="Q7YRK7"/>
<dbReference type="STRING" id="1868482.ENSTSYP00000000779"/>
<dbReference type="Ensembl" id="ENSTSYT00000000845">
    <property type="protein sequence ID" value="ENSTSYP00000000779"/>
    <property type="gene ID" value="ENSTSYG00000000843"/>
</dbReference>
<dbReference type="GeneID" id="103268110"/>
<dbReference type="KEGG" id="csyr:103268110"/>
<dbReference type="HOGENOM" id="CLU_216641_0_0_1"/>
<dbReference type="OMA" id="KNYDAMK"/>
<dbReference type="OrthoDB" id="9514572at2759"/>
<dbReference type="UniPathway" id="UPA00705"/>
<dbReference type="Proteomes" id="UP000189704">
    <property type="component" value="Unplaced"/>
</dbReference>
<dbReference type="GO" id="GO:0005743">
    <property type="term" value="C:mitochondrial inner membrane"/>
    <property type="evidence" value="ECO:0007669"/>
    <property type="project" value="UniProtKB-SubCell"/>
</dbReference>
<dbReference type="GO" id="GO:0006119">
    <property type="term" value="P:oxidative phosphorylation"/>
    <property type="evidence" value="ECO:0007669"/>
    <property type="project" value="UniProtKB-UniPathway"/>
</dbReference>
<dbReference type="CDD" id="cd22901">
    <property type="entry name" value="CcO_VIc"/>
    <property type="match status" value="1"/>
</dbReference>
<dbReference type="FunFam" id="4.10.93.10:FF:000001">
    <property type="entry name" value="Cytochrome c oxidase subunit 6C"/>
    <property type="match status" value="1"/>
</dbReference>
<dbReference type="Gene3D" id="4.10.93.10">
    <property type="entry name" value="Mitochondrial cytochrome c oxidase subunit VIc/VIIs"/>
    <property type="match status" value="1"/>
</dbReference>
<dbReference type="InterPro" id="IPR051389">
    <property type="entry name" value="Cytochrome_c_oxidase_VIc"/>
</dbReference>
<dbReference type="InterPro" id="IPR034884">
    <property type="entry name" value="Cytochrome_c_oxidase_VIc/VIIs"/>
</dbReference>
<dbReference type="InterPro" id="IPR037169">
    <property type="entry name" value="Cytochrome_c_oxidase_VIc_sf"/>
</dbReference>
<dbReference type="PANTHER" id="PTHR48416">
    <property type="entry name" value="CYTOCHROME C OXIDASE SUBUNIT 6C"/>
    <property type="match status" value="1"/>
</dbReference>
<dbReference type="PANTHER" id="PTHR48416:SF1">
    <property type="entry name" value="CYTOCHROME C OXIDASE SUBUNIT 6C"/>
    <property type="match status" value="1"/>
</dbReference>
<dbReference type="Pfam" id="PF02937">
    <property type="entry name" value="COX6C"/>
    <property type="match status" value="1"/>
</dbReference>
<dbReference type="SUPFAM" id="SSF81415">
    <property type="entry name" value="Mitochondrial cytochrome c oxidase subunit VIc"/>
    <property type="match status" value="1"/>
</dbReference>
<name>COX6C_CARSF</name>
<protein>
    <recommendedName>
        <fullName>Cytochrome c oxidase subunit 6C</fullName>
    </recommendedName>
    <alternativeName>
        <fullName>Cytochrome c oxidase polypeptide VIc</fullName>
    </alternativeName>
</protein>
<sequence>MSSGALTKPQMRGLLAKRLRFHIVGAFAVSLGVAAFYKFAVAEPRKKAYADFYRNYDSMKDFEEMRKAGIFQSAK</sequence>
<feature type="chain" id="PRO_0000006141" description="Cytochrome c oxidase subunit 6C">
    <location>
        <begin position="1"/>
        <end position="75"/>
    </location>
</feature>
<feature type="topological domain" description="Mitochondrial matrix" evidence="1">
    <location>
        <begin position="1"/>
        <end position="13"/>
    </location>
</feature>
<feature type="transmembrane region" description="Helical" evidence="1">
    <location>
        <begin position="14"/>
        <end position="54"/>
    </location>
</feature>
<feature type="topological domain" description="Mitochondrial intermembrane" evidence="1">
    <location>
        <begin position="55"/>
        <end position="75"/>
    </location>
</feature>
<keyword id="KW-0472">Membrane</keyword>
<keyword id="KW-0496">Mitochondrion</keyword>
<keyword id="KW-0999">Mitochondrion inner membrane</keyword>
<keyword id="KW-1185">Reference proteome</keyword>
<keyword id="KW-0812">Transmembrane</keyword>
<keyword id="KW-1133">Transmembrane helix</keyword>
<organism>
    <name type="scientific">Carlito syrichta</name>
    <name type="common">Philippine tarsier</name>
    <name type="synonym">Tarsius syrichta</name>
    <dbReference type="NCBI Taxonomy" id="1868482"/>
    <lineage>
        <taxon>Eukaryota</taxon>
        <taxon>Metazoa</taxon>
        <taxon>Chordata</taxon>
        <taxon>Craniata</taxon>
        <taxon>Vertebrata</taxon>
        <taxon>Euteleostomi</taxon>
        <taxon>Mammalia</taxon>
        <taxon>Eutheria</taxon>
        <taxon>Euarchontoglires</taxon>
        <taxon>Primates</taxon>
        <taxon>Haplorrhini</taxon>
        <taxon>Tarsiiformes</taxon>
        <taxon>Tarsiidae</taxon>
        <taxon>Carlito</taxon>
    </lineage>
</organism>
<comment type="function">
    <text evidence="1">Component of the cytochrome c oxidase, the last enzyme in the mitochondrial electron transport chain which drives oxidative phosphorylation. The respiratory chain contains 3 multisubunit complexes succinate dehydrogenase (complex II, CII), ubiquinol-cytochrome c oxidoreductase (cytochrome b-c1 complex, complex III, CIII) and cytochrome c oxidase (complex IV, CIV), that cooperate to transfer electrons derived from NADH and succinate to molecular oxygen, creating an electrochemical gradient over the inner membrane that drives transmembrane transport and the ATP synthase. Cytochrome c oxidase is the component of the respiratory chain that catalyzes the reduction of oxygen to water. Electrons originating from reduced cytochrome c in the intermembrane space (IMS) are transferred via the dinuclear copper A center (CU(A)) of subunit 2 and heme A of subunit 1 to the active site in subunit 1, a binuclear center (BNC) formed by heme A3 and copper B (CU(B)). The BNC reduces molecular oxygen to 2 water molecules using 4 electrons from cytochrome c in the IMS and 4 protons from the mitochondrial matrix.</text>
</comment>
<comment type="pathway">
    <text evidence="1">Energy metabolism; oxidative phosphorylation.</text>
</comment>
<comment type="subunit">
    <text evidence="1">Component of the cytochrome c oxidase (complex IV, CIV), a multisubunit enzyme composed of 14 subunits. The complex is composed of a catalytic core of 3 subunits MT-CO1, MT-CO2 and MT-CO3, encoded in the mitochondrial DNA, and 11 supernumerary subunits COX4I, COX5A, COX5B, COX6A, COX6B, COX6C, COX7A, COX7B, COX7C, COX8 and NDUFA4, which are encoded in the nuclear genome. The complex exists as a monomer or a dimer and forms supercomplexes (SCs) in the inner mitochondrial membrane with NADH-ubiquinone oxidoreductase (complex I, CI) and ubiquinol-cytochrome c oxidoreductase (cytochrome b-c1 complex, complex III, CIII), resulting in different assemblies (supercomplex SCI(1)III(2)IV(1) and megacomplex MCI(2)III(2)IV(2)).</text>
</comment>
<comment type="subcellular location">
    <subcellularLocation>
        <location evidence="1">Mitochondrion inner membrane</location>
        <topology evidence="1">Single-pass membrane protein</topology>
    </subcellularLocation>
</comment>
<comment type="similarity">
    <text evidence="2">Belongs to the cytochrome c oxidase subunit 6c family.</text>
</comment>
<gene>
    <name type="primary">COX6C</name>
</gene>
<proteinExistence type="inferred from homology"/>
<accession>Q7YRK7</accession>